<evidence type="ECO:0000255" key="1">
    <source>
        <dbReference type="HAMAP-Rule" id="MF_01544"/>
    </source>
</evidence>
<feature type="chain" id="PRO_1000146721" description="p-hydroxybenzoic acid efflux pump subunit AaeA">
    <location>
        <begin position="1"/>
        <end position="310"/>
    </location>
</feature>
<feature type="transmembrane region" description="Helical" evidence="1">
    <location>
        <begin position="12"/>
        <end position="32"/>
    </location>
</feature>
<comment type="function">
    <text evidence="1">Forms an efflux pump with AaeB.</text>
</comment>
<comment type="subcellular location">
    <subcellularLocation>
        <location evidence="1">Cell inner membrane</location>
        <topology evidence="1">Single-pass membrane protein</topology>
    </subcellularLocation>
</comment>
<comment type="similarity">
    <text evidence="1">Belongs to the membrane fusion protein (MFP) (TC 8.A.1) family.</text>
</comment>
<dbReference type="EMBL" id="CP000964">
    <property type="protein sequence ID" value="ACI11657.1"/>
    <property type="molecule type" value="Genomic_DNA"/>
</dbReference>
<dbReference type="SMR" id="B5XSP8"/>
<dbReference type="KEGG" id="kpe:KPK_0468"/>
<dbReference type="HOGENOM" id="CLU_018816_15_2_6"/>
<dbReference type="Proteomes" id="UP000001734">
    <property type="component" value="Chromosome"/>
</dbReference>
<dbReference type="GO" id="GO:0005886">
    <property type="term" value="C:plasma membrane"/>
    <property type="evidence" value="ECO:0007669"/>
    <property type="project" value="UniProtKB-SubCell"/>
</dbReference>
<dbReference type="GO" id="GO:0022857">
    <property type="term" value="F:transmembrane transporter activity"/>
    <property type="evidence" value="ECO:0007669"/>
    <property type="project" value="UniProtKB-UniRule"/>
</dbReference>
<dbReference type="Gene3D" id="2.40.30.170">
    <property type="match status" value="1"/>
</dbReference>
<dbReference type="Gene3D" id="2.40.50.100">
    <property type="match status" value="1"/>
</dbReference>
<dbReference type="HAMAP" id="MF_01544">
    <property type="entry name" value="AaeA"/>
    <property type="match status" value="1"/>
</dbReference>
<dbReference type="InterPro" id="IPR043602">
    <property type="entry name" value="CusB-like_dom_1"/>
</dbReference>
<dbReference type="InterPro" id="IPR032317">
    <property type="entry name" value="CusB_D23"/>
</dbReference>
<dbReference type="InterPro" id="IPR050393">
    <property type="entry name" value="MFP_Efflux_Pump"/>
</dbReference>
<dbReference type="InterPro" id="IPR022871">
    <property type="entry name" value="PHBA_efflux_pump_AaeA"/>
</dbReference>
<dbReference type="InterPro" id="IPR006143">
    <property type="entry name" value="RND_pump_MFP"/>
</dbReference>
<dbReference type="NCBIfam" id="NF007850">
    <property type="entry name" value="PRK10559.1"/>
    <property type="match status" value="1"/>
</dbReference>
<dbReference type="NCBIfam" id="TIGR01730">
    <property type="entry name" value="RND_mfp"/>
    <property type="match status" value="1"/>
</dbReference>
<dbReference type="PANTHER" id="PTHR30367:SF12">
    <property type="entry name" value="P-HYDROXYBENZOIC ACID EFFLUX PUMP SUBUNIT AAEA"/>
    <property type="match status" value="1"/>
</dbReference>
<dbReference type="PANTHER" id="PTHR30367">
    <property type="entry name" value="P-HYDROXYBENZOIC ACID EFFLUX PUMP SUBUNIT AAEA-RELATED"/>
    <property type="match status" value="1"/>
</dbReference>
<dbReference type="Pfam" id="PF00529">
    <property type="entry name" value="CusB_dom_1"/>
    <property type="match status" value="1"/>
</dbReference>
<dbReference type="Pfam" id="PF16576">
    <property type="entry name" value="HlyD_D23"/>
    <property type="match status" value="1"/>
</dbReference>
<dbReference type="SUPFAM" id="SSF111369">
    <property type="entry name" value="HlyD-like secretion proteins"/>
    <property type="match status" value="1"/>
</dbReference>
<protein>
    <recommendedName>
        <fullName evidence="1">p-hydroxybenzoic acid efflux pump subunit AaeA</fullName>
        <shortName evidence="1">pHBA efflux pump protein A</shortName>
    </recommendedName>
</protein>
<accession>B5XSP8</accession>
<sequence>MKTLTRNILRTAITVILVILAFVAIFRAWVYYTASPWTRDARFSADIVAIAPDVSGLISQVNVKDNQLVKKDQVLFVIDQPRYQKALAEAEADVAYYQTLAQEKRVEAGRRNKLGIQAMSREEIDQANNVLQTVEHQLAKAVASRDLARLDLERTEIRAPADGWVTNLNVYTGEFITRGSTAVALVKENTFYVMAYLEETKLEGVRPGYRAEITPLGSSKTIKGTVDSIAAGVTNASSSSDSKGMASVDSNLEWVRLAQRVPVRIRLDQQQGNLWPSGTTATVVITGKEDRDTSRANFFQKLAMRLREFG</sequence>
<keyword id="KW-0997">Cell inner membrane</keyword>
<keyword id="KW-1003">Cell membrane</keyword>
<keyword id="KW-0472">Membrane</keyword>
<keyword id="KW-0812">Transmembrane</keyword>
<keyword id="KW-1133">Transmembrane helix</keyword>
<keyword id="KW-0813">Transport</keyword>
<reference key="1">
    <citation type="journal article" date="2008" name="PLoS Genet.">
        <title>Complete genome sequence of the N2-fixing broad host range endophyte Klebsiella pneumoniae 342 and virulence predictions verified in mice.</title>
        <authorList>
            <person name="Fouts D.E."/>
            <person name="Tyler H.L."/>
            <person name="DeBoy R.T."/>
            <person name="Daugherty S."/>
            <person name="Ren Q."/>
            <person name="Badger J.H."/>
            <person name="Durkin A.S."/>
            <person name="Huot H."/>
            <person name="Shrivastava S."/>
            <person name="Kothari S."/>
            <person name="Dodson R.J."/>
            <person name="Mohamoud Y."/>
            <person name="Khouri H."/>
            <person name="Roesch L.F.W."/>
            <person name="Krogfelt K.A."/>
            <person name="Struve C."/>
            <person name="Triplett E.W."/>
            <person name="Methe B.A."/>
        </authorList>
    </citation>
    <scope>NUCLEOTIDE SEQUENCE [LARGE SCALE GENOMIC DNA]</scope>
    <source>
        <strain>342</strain>
    </source>
</reference>
<proteinExistence type="inferred from homology"/>
<name>AAEA_KLEP3</name>
<gene>
    <name evidence="1" type="primary">aaeA</name>
    <name type="ordered locus">KPK_0468</name>
</gene>
<organism>
    <name type="scientific">Klebsiella pneumoniae (strain 342)</name>
    <dbReference type="NCBI Taxonomy" id="507522"/>
    <lineage>
        <taxon>Bacteria</taxon>
        <taxon>Pseudomonadati</taxon>
        <taxon>Pseudomonadota</taxon>
        <taxon>Gammaproteobacteria</taxon>
        <taxon>Enterobacterales</taxon>
        <taxon>Enterobacteriaceae</taxon>
        <taxon>Klebsiella/Raoultella group</taxon>
        <taxon>Klebsiella</taxon>
        <taxon>Klebsiella pneumoniae complex</taxon>
    </lineage>
</organism>